<evidence type="ECO:0000255" key="1">
    <source>
        <dbReference type="HAMAP-Rule" id="MF_00766"/>
    </source>
</evidence>
<evidence type="ECO:0000256" key="2">
    <source>
        <dbReference type="SAM" id="MobiDB-lite"/>
    </source>
</evidence>
<dbReference type="EC" id="2.4.99.28" evidence="1"/>
<dbReference type="EMBL" id="AM286690">
    <property type="protein sequence ID" value="CAL17882.1"/>
    <property type="molecule type" value="Genomic_DNA"/>
</dbReference>
<dbReference type="RefSeq" id="WP_011589708.1">
    <property type="nucleotide sequence ID" value="NC_008260.1"/>
</dbReference>
<dbReference type="SMR" id="Q0VLR6"/>
<dbReference type="STRING" id="393595.ABO_2434"/>
<dbReference type="CAZy" id="GT51">
    <property type="family name" value="Glycosyltransferase Family 51"/>
</dbReference>
<dbReference type="KEGG" id="abo:ABO_2434"/>
<dbReference type="eggNOG" id="COG0744">
    <property type="taxonomic scope" value="Bacteria"/>
</dbReference>
<dbReference type="HOGENOM" id="CLU_006354_1_0_6"/>
<dbReference type="OrthoDB" id="9766909at2"/>
<dbReference type="UniPathway" id="UPA00219"/>
<dbReference type="Proteomes" id="UP000008871">
    <property type="component" value="Chromosome"/>
</dbReference>
<dbReference type="GO" id="GO:0009274">
    <property type="term" value="C:peptidoglycan-based cell wall"/>
    <property type="evidence" value="ECO:0007669"/>
    <property type="project" value="InterPro"/>
</dbReference>
<dbReference type="GO" id="GO:0005886">
    <property type="term" value="C:plasma membrane"/>
    <property type="evidence" value="ECO:0007669"/>
    <property type="project" value="UniProtKB-SubCell"/>
</dbReference>
<dbReference type="GO" id="GO:0016763">
    <property type="term" value="F:pentosyltransferase activity"/>
    <property type="evidence" value="ECO:0007669"/>
    <property type="project" value="InterPro"/>
</dbReference>
<dbReference type="GO" id="GO:0008955">
    <property type="term" value="F:peptidoglycan glycosyltransferase activity"/>
    <property type="evidence" value="ECO:0007669"/>
    <property type="project" value="UniProtKB-UniRule"/>
</dbReference>
<dbReference type="GO" id="GO:0071555">
    <property type="term" value="P:cell wall organization"/>
    <property type="evidence" value="ECO:0007669"/>
    <property type="project" value="UniProtKB-KW"/>
</dbReference>
<dbReference type="GO" id="GO:0009252">
    <property type="term" value="P:peptidoglycan biosynthetic process"/>
    <property type="evidence" value="ECO:0007669"/>
    <property type="project" value="UniProtKB-UniRule"/>
</dbReference>
<dbReference type="GO" id="GO:0008360">
    <property type="term" value="P:regulation of cell shape"/>
    <property type="evidence" value="ECO:0007669"/>
    <property type="project" value="UniProtKB-KW"/>
</dbReference>
<dbReference type="Gene3D" id="1.10.3810.10">
    <property type="entry name" value="Biosynthetic peptidoglycan transglycosylase-like"/>
    <property type="match status" value="1"/>
</dbReference>
<dbReference type="HAMAP" id="MF_00766">
    <property type="entry name" value="PGT_MtgA"/>
    <property type="match status" value="1"/>
</dbReference>
<dbReference type="InterPro" id="IPR001264">
    <property type="entry name" value="Glyco_trans_51"/>
</dbReference>
<dbReference type="InterPro" id="IPR023346">
    <property type="entry name" value="Lysozyme-like_dom_sf"/>
</dbReference>
<dbReference type="InterPro" id="IPR036950">
    <property type="entry name" value="PBP_transglycosylase"/>
</dbReference>
<dbReference type="InterPro" id="IPR011812">
    <property type="entry name" value="Pep_trsgly"/>
</dbReference>
<dbReference type="NCBIfam" id="TIGR02070">
    <property type="entry name" value="mono_pep_trsgly"/>
    <property type="match status" value="1"/>
</dbReference>
<dbReference type="PANTHER" id="PTHR30400:SF0">
    <property type="entry name" value="BIOSYNTHETIC PEPTIDOGLYCAN TRANSGLYCOSYLASE"/>
    <property type="match status" value="1"/>
</dbReference>
<dbReference type="PANTHER" id="PTHR30400">
    <property type="entry name" value="MONOFUNCTIONAL BIOSYNTHETIC PEPTIDOGLYCAN TRANSGLYCOSYLASE"/>
    <property type="match status" value="1"/>
</dbReference>
<dbReference type="Pfam" id="PF00912">
    <property type="entry name" value="Transgly"/>
    <property type="match status" value="1"/>
</dbReference>
<dbReference type="SUPFAM" id="SSF53955">
    <property type="entry name" value="Lysozyme-like"/>
    <property type="match status" value="1"/>
</dbReference>
<organism>
    <name type="scientific">Alcanivorax borkumensis (strain ATCC 700651 / DSM 11573 / NCIMB 13689 / SK2)</name>
    <dbReference type="NCBI Taxonomy" id="393595"/>
    <lineage>
        <taxon>Bacteria</taxon>
        <taxon>Pseudomonadati</taxon>
        <taxon>Pseudomonadota</taxon>
        <taxon>Gammaproteobacteria</taxon>
        <taxon>Oceanospirillales</taxon>
        <taxon>Alcanivoracaceae</taxon>
        <taxon>Alcanivorax</taxon>
    </lineage>
</organism>
<keyword id="KW-0997">Cell inner membrane</keyword>
<keyword id="KW-1003">Cell membrane</keyword>
<keyword id="KW-0133">Cell shape</keyword>
<keyword id="KW-0961">Cell wall biogenesis/degradation</keyword>
<keyword id="KW-0328">Glycosyltransferase</keyword>
<keyword id="KW-0472">Membrane</keyword>
<keyword id="KW-0573">Peptidoglycan synthesis</keyword>
<keyword id="KW-1185">Reference proteome</keyword>
<keyword id="KW-0808">Transferase</keyword>
<keyword id="KW-0812">Transmembrane</keyword>
<keyword id="KW-1133">Transmembrane helix</keyword>
<protein>
    <recommendedName>
        <fullName evidence="1">Biosynthetic peptidoglycan transglycosylase</fullName>
        <ecNumber evidence="1">2.4.99.28</ecNumber>
    </recommendedName>
    <alternativeName>
        <fullName evidence="1">Glycan polymerase</fullName>
    </alternativeName>
    <alternativeName>
        <fullName evidence="1">Peptidoglycan glycosyltransferase MtgA</fullName>
        <shortName evidence="1">PGT</shortName>
    </alternativeName>
</protein>
<accession>Q0VLR6</accession>
<comment type="function">
    <text evidence="1">Peptidoglycan polymerase that catalyzes glycan chain elongation from lipid-linked precursors.</text>
</comment>
<comment type="catalytic activity">
    <reaction evidence="1">
        <text>[GlcNAc-(1-&gt;4)-Mur2Ac(oyl-L-Ala-gamma-D-Glu-L-Lys-D-Ala-D-Ala)](n)-di-trans,octa-cis-undecaprenyl diphosphate + beta-D-GlcNAc-(1-&gt;4)-Mur2Ac(oyl-L-Ala-gamma-D-Glu-L-Lys-D-Ala-D-Ala)-di-trans,octa-cis-undecaprenyl diphosphate = [GlcNAc-(1-&gt;4)-Mur2Ac(oyl-L-Ala-gamma-D-Glu-L-Lys-D-Ala-D-Ala)](n+1)-di-trans,octa-cis-undecaprenyl diphosphate + di-trans,octa-cis-undecaprenyl diphosphate + H(+)</text>
        <dbReference type="Rhea" id="RHEA:23708"/>
        <dbReference type="Rhea" id="RHEA-COMP:9602"/>
        <dbReference type="Rhea" id="RHEA-COMP:9603"/>
        <dbReference type="ChEBI" id="CHEBI:15378"/>
        <dbReference type="ChEBI" id="CHEBI:58405"/>
        <dbReference type="ChEBI" id="CHEBI:60033"/>
        <dbReference type="ChEBI" id="CHEBI:78435"/>
        <dbReference type="EC" id="2.4.99.28"/>
    </reaction>
</comment>
<comment type="pathway">
    <text evidence="1">Cell wall biogenesis; peptidoglycan biosynthesis.</text>
</comment>
<comment type="subcellular location">
    <subcellularLocation>
        <location evidence="1">Cell inner membrane</location>
        <topology evidence="1">Single-pass membrane protein</topology>
    </subcellularLocation>
</comment>
<comment type="similarity">
    <text evidence="1">Belongs to the glycosyltransferase 51 family.</text>
</comment>
<reference key="1">
    <citation type="journal article" date="2006" name="Nat. Biotechnol.">
        <title>Genome sequence of the ubiquitous hydrocarbon-degrading marine bacterium Alcanivorax borkumensis.</title>
        <authorList>
            <person name="Schneiker S."/>
            <person name="Martins dos Santos V.A.P."/>
            <person name="Bartels D."/>
            <person name="Bekel T."/>
            <person name="Brecht M."/>
            <person name="Buhrmester J."/>
            <person name="Chernikova T.N."/>
            <person name="Denaro R."/>
            <person name="Ferrer M."/>
            <person name="Gertler C."/>
            <person name="Goesmann A."/>
            <person name="Golyshina O.V."/>
            <person name="Kaminski F."/>
            <person name="Khachane A.N."/>
            <person name="Lang S."/>
            <person name="Linke B."/>
            <person name="McHardy A.C."/>
            <person name="Meyer F."/>
            <person name="Nechitaylo T."/>
            <person name="Puehler A."/>
            <person name="Regenhardt D."/>
            <person name="Rupp O."/>
            <person name="Sabirova J.S."/>
            <person name="Selbitschka W."/>
            <person name="Yakimov M.M."/>
            <person name="Timmis K.N."/>
            <person name="Vorhoelter F.-J."/>
            <person name="Weidner S."/>
            <person name="Kaiser O."/>
            <person name="Golyshin P.N."/>
        </authorList>
    </citation>
    <scope>NUCLEOTIDE SEQUENCE [LARGE SCALE GENOMIC DNA]</scope>
    <source>
        <strain>ATCC 700651 / DSM 11573 / NCIMB 13689 / SK2</strain>
    </source>
</reference>
<proteinExistence type="inferred from homology"/>
<feature type="chain" id="PRO_0000257653" description="Biosynthetic peptidoglycan transglycosylase">
    <location>
        <begin position="1"/>
        <end position="245"/>
    </location>
</feature>
<feature type="transmembrane region" description="Helical" evidence="1">
    <location>
        <begin position="10"/>
        <end position="30"/>
    </location>
</feature>
<feature type="region of interest" description="Disordered" evidence="2">
    <location>
        <begin position="224"/>
        <end position="245"/>
    </location>
</feature>
<feature type="compositionally biased region" description="Pro residues" evidence="2">
    <location>
        <begin position="226"/>
        <end position="239"/>
    </location>
</feature>
<gene>
    <name evidence="1" type="primary">mtgA</name>
    <name type="ordered locus">ABO_2434</name>
</gene>
<sequence length="245" mass="27768">MTFRRRLLQFLALLFVVATLAQLWYLGQVLRLQHHNPDSSAYMHRAQKQGNVQQDWRDYDQISDYLKRAVLISEDAHFTQHTGFDWEGIRYALKRNMEAGKPVAGGSTITQQLAKNLYLSGERTYTRKAQEAVIALMLEIGLSKRRILELYLNVAQWGHQIYGAEAAAQHYFQISAAQLSPLQAAQLAAMLPRPNLYDFKGPTDYVQQRASWIQAQMALVRIPDPGTVPLPPPPEPTAPPEGNTQ</sequence>
<name>MTGA_ALCBS</name>